<keyword id="KW-0903">Direct protein sequencing</keyword>
<keyword id="KW-1185">Reference proteome</keyword>
<keyword id="KW-0749">Sporulation</keyword>
<sequence>MVKRKANHVINGMNDAKSQGKGAGYIENDQLVLTEAERQNNKKRKTNQ</sequence>
<protein>
    <recommendedName>
        <fullName>Small, acid-soluble spore protein O</fullName>
        <shortName>SASP O</shortName>
    </recommendedName>
</protein>
<proteinExistence type="evidence at protein level"/>
<organism>
    <name type="scientific">Bacillus subtilis (strain 168)</name>
    <dbReference type="NCBI Taxonomy" id="224308"/>
    <lineage>
        <taxon>Bacteria</taxon>
        <taxon>Bacillati</taxon>
        <taxon>Bacillota</taxon>
        <taxon>Bacilli</taxon>
        <taxon>Bacillales</taxon>
        <taxon>Bacillaceae</taxon>
        <taxon>Bacillus</taxon>
    </lineage>
</organism>
<comment type="subcellular location">
    <subcellularLocation>
        <location evidence="2">Spore core</location>
    </subcellularLocation>
</comment>
<comment type="induction">
    <text evidence="2">Expressed only in the forespore compartment of sporulating cells. Expression is sigma G-dependent.</text>
</comment>
<comment type="similarity">
    <text evidence="4">Belongs to the SspO family.</text>
</comment>
<comment type="caution">
    <text evidence="5">Was originally thought to be a spore coat protein.</text>
</comment>
<gene>
    <name type="primary">sspO</name>
    <name type="synonym">cotK</name>
    <name type="ordered locus">BSU17990</name>
</gene>
<name>SSPO_BACSU</name>
<reference key="1">
    <citation type="journal article" date="1997" name="J. Bacteriol.">
        <title>CotM of Bacillus subtilis, a member of the alpha-crystallin family of stress proteins, is induced during development and participates in spore outer coat formation.</title>
        <authorList>
            <person name="Henriques A.O."/>
            <person name="Beall B.W."/>
            <person name="Moran C.P. Jr."/>
        </authorList>
    </citation>
    <scope>NUCLEOTIDE SEQUENCE [GENOMIC DNA]</scope>
    <source>
        <strain>168</strain>
    </source>
</reference>
<reference key="2">
    <citation type="journal article" date="1997" name="Nature">
        <title>The complete genome sequence of the Gram-positive bacterium Bacillus subtilis.</title>
        <authorList>
            <person name="Kunst F."/>
            <person name="Ogasawara N."/>
            <person name="Moszer I."/>
            <person name="Albertini A.M."/>
            <person name="Alloni G."/>
            <person name="Azevedo V."/>
            <person name="Bertero M.G."/>
            <person name="Bessieres P."/>
            <person name="Bolotin A."/>
            <person name="Borchert S."/>
            <person name="Borriss R."/>
            <person name="Boursier L."/>
            <person name="Brans A."/>
            <person name="Braun M."/>
            <person name="Brignell S.C."/>
            <person name="Bron S."/>
            <person name="Brouillet S."/>
            <person name="Bruschi C.V."/>
            <person name="Caldwell B."/>
            <person name="Capuano V."/>
            <person name="Carter N.M."/>
            <person name="Choi S.-K."/>
            <person name="Codani J.-J."/>
            <person name="Connerton I.F."/>
            <person name="Cummings N.J."/>
            <person name="Daniel R.A."/>
            <person name="Denizot F."/>
            <person name="Devine K.M."/>
            <person name="Duesterhoeft A."/>
            <person name="Ehrlich S.D."/>
            <person name="Emmerson P.T."/>
            <person name="Entian K.-D."/>
            <person name="Errington J."/>
            <person name="Fabret C."/>
            <person name="Ferrari E."/>
            <person name="Foulger D."/>
            <person name="Fritz C."/>
            <person name="Fujita M."/>
            <person name="Fujita Y."/>
            <person name="Fuma S."/>
            <person name="Galizzi A."/>
            <person name="Galleron N."/>
            <person name="Ghim S.-Y."/>
            <person name="Glaser P."/>
            <person name="Goffeau A."/>
            <person name="Golightly E.J."/>
            <person name="Grandi G."/>
            <person name="Guiseppi G."/>
            <person name="Guy B.J."/>
            <person name="Haga K."/>
            <person name="Haiech J."/>
            <person name="Harwood C.R."/>
            <person name="Henaut A."/>
            <person name="Hilbert H."/>
            <person name="Holsappel S."/>
            <person name="Hosono S."/>
            <person name="Hullo M.-F."/>
            <person name="Itaya M."/>
            <person name="Jones L.-M."/>
            <person name="Joris B."/>
            <person name="Karamata D."/>
            <person name="Kasahara Y."/>
            <person name="Klaerr-Blanchard M."/>
            <person name="Klein C."/>
            <person name="Kobayashi Y."/>
            <person name="Koetter P."/>
            <person name="Koningstein G."/>
            <person name="Krogh S."/>
            <person name="Kumano M."/>
            <person name="Kurita K."/>
            <person name="Lapidus A."/>
            <person name="Lardinois S."/>
            <person name="Lauber J."/>
            <person name="Lazarevic V."/>
            <person name="Lee S.-M."/>
            <person name="Levine A."/>
            <person name="Liu H."/>
            <person name="Masuda S."/>
            <person name="Mauel C."/>
            <person name="Medigue C."/>
            <person name="Medina N."/>
            <person name="Mellado R.P."/>
            <person name="Mizuno M."/>
            <person name="Moestl D."/>
            <person name="Nakai S."/>
            <person name="Noback M."/>
            <person name="Noone D."/>
            <person name="O'Reilly M."/>
            <person name="Ogawa K."/>
            <person name="Ogiwara A."/>
            <person name="Oudega B."/>
            <person name="Park S.-H."/>
            <person name="Parro V."/>
            <person name="Pohl T.M."/>
            <person name="Portetelle D."/>
            <person name="Porwollik S."/>
            <person name="Prescott A.M."/>
            <person name="Presecan E."/>
            <person name="Pujic P."/>
            <person name="Purnelle B."/>
            <person name="Rapoport G."/>
            <person name="Rey M."/>
            <person name="Reynolds S."/>
            <person name="Rieger M."/>
            <person name="Rivolta C."/>
            <person name="Rocha E."/>
            <person name="Roche B."/>
            <person name="Rose M."/>
            <person name="Sadaie Y."/>
            <person name="Sato T."/>
            <person name="Scanlan E."/>
            <person name="Schleich S."/>
            <person name="Schroeter R."/>
            <person name="Scoffone F."/>
            <person name="Sekiguchi J."/>
            <person name="Sekowska A."/>
            <person name="Seror S.J."/>
            <person name="Serror P."/>
            <person name="Shin B.-S."/>
            <person name="Soldo B."/>
            <person name="Sorokin A."/>
            <person name="Tacconi E."/>
            <person name="Takagi T."/>
            <person name="Takahashi H."/>
            <person name="Takemaru K."/>
            <person name="Takeuchi M."/>
            <person name="Tamakoshi A."/>
            <person name="Tanaka T."/>
            <person name="Terpstra P."/>
            <person name="Tognoni A."/>
            <person name="Tosato V."/>
            <person name="Uchiyama S."/>
            <person name="Vandenbol M."/>
            <person name="Vannier F."/>
            <person name="Vassarotti A."/>
            <person name="Viari A."/>
            <person name="Wambutt R."/>
            <person name="Wedler E."/>
            <person name="Wedler H."/>
            <person name="Weitzenegger T."/>
            <person name="Winters P."/>
            <person name="Wipat A."/>
            <person name="Yamamoto H."/>
            <person name="Yamane K."/>
            <person name="Yasumoto K."/>
            <person name="Yata K."/>
            <person name="Yoshida K."/>
            <person name="Yoshikawa H.-F."/>
            <person name="Zumstein E."/>
            <person name="Yoshikawa H."/>
            <person name="Danchin A."/>
        </authorList>
    </citation>
    <scope>NUCLEOTIDE SEQUENCE [LARGE SCALE GENOMIC DNA]</scope>
    <source>
        <strain>168</strain>
    </source>
</reference>
<reference key="3">
    <citation type="journal article" date="1998" name="J. Bacteriol.">
        <title>New small, acid-soluble proteins unique to spores of Bacillus subtilis: identification of the coding genes and regulation and function of two of these genes.</title>
        <authorList>
            <person name="Bagyan I."/>
            <person name="Setlow B."/>
            <person name="Setlow P."/>
        </authorList>
    </citation>
    <scope>PROTEIN SEQUENCE OF 2-13</scope>
</reference>
<reference key="4">
    <citation type="journal article" date="2000" name="Gene">
        <title>Analysis of the regulation and function of five genes encoding small, acid-soluble spore proteins of Bacillus subtilis.</title>
        <authorList>
            <person name="Cabrera-Hernandez A."/>
            <person name="Setlow P."/>
        </authorList>
    </citation>
    <scope>SUBCELLULAR LOCATION</scope>
    <scope>INDUCTION</scope>
</reference>
<evidence type="ECO:0000256" key="1">
    <source>
        <dbReference type="SAM" id="MobiDB-lite"/>
    </source>
</evidence>
<evidence type="ECO:0000269" key="2">
    <source>
    </source>
</evidence>
<evidence type="ECO:0000269" key="3">
    <source>
    </source>
</evidence>
<evidence type="ECO:0000305" key="4"/>
<evidence type="ECO:0000305" key="5">
    <source>
    </source>
</evidence>
<feature type="initiator methionine" description="Removed" evidence="3">
    <location>
        <position position="1"/>
    </location>
</feature>
<feature type="chain" id="PRO_0000217208" description="Small, acid-soluble spore protein O">
    <location>
        <begin position="2"/>
        <end position="48"/>
    </location>
</feature>
<feature type="region of interest" description="Disordered" evidence="1">
    <location>
        <begin position="1"/>
        <end position="22"/>
    </location>
</feature>
<accession>P71031</accession>
<dbReference type="EMBL" id="U72073">
    <property type="protein sequence ID" value="AAC44987.1"/>
    <property type="molecule type" value="Genomic_DNA"/>
</dbReference>
<dbReference type="EMBL" id="AL009126">
    <property type="protein sequence ID" value="CAB13683.1"/>
    <property type="molecule type" value="Genomic_DNA"/>
</dbReference>
<dbReference type="PIR" id="A69606">
    <property type="entry name" value="A69606"/>
</dbReference>
<dbReference type="RefSeq" id="NP_389682.1">
    <property type="nucleotide sequence ID" value="NC_000964.3"/>
</dbReference>
<dbReference type="RefSeq" id="WP_003244839.1">
    <property type="nucleotide sequence ID" value="NZ_OZ025638.1"/>
</dbReference>
<dbReference type="FunCoup" id="P71031">
    <property type="interactions" value="47"/>
</dbReference>
<dbReference type="STRING" id="224308.BSU17990"/>
<dbReference type="PaxDb" id="224308-BSU17990"/>
<dbReference type="EnsemblBacteria" id="CAB13683">
    <property type="protein sequence ID" value="CAB13683"/>
    <property type="gene ID" value="BSU_17990"/>
</dbReference>
<dbReference type="GeneID" id="86873686"/>
<dbReference type="GeneID" id="938222"/>
<dbReference type="KEGG" id="bsu:BSU17990"/>
<dbReference type="PATRIC" id="fig|224308.179.peg.1960"/>
<dbReference type="InParanoid" id="P71031"/>
<dbReference type="OrthoDB" id="2692139at2"/>
<dbReference type="BioCyc" id="BSUB:BSU17990-MONOMER"/>
<dbReference type="Proteomes" id="UP000001570">
    <property type="component" value="Chromosome"/>
</dbReference>
<dbReference type="GO" id="GO:0042601">
    <property type="term" value="C:endospore-forming forespore"/>
    <property type="evidence" value="ECO:0007669"/>
    <property type="project" value="InterPro"/>
</dbReference>
<dbReference type="GO" id="GO:0030436">
    <property type="term" value="P:asexual sporulation"/>
    <property type="evidence" value="ECO:0007669"/>
    <property type="project" value="UniProtKB-UniRule"/>
</dbReference>
<dbReference type="GO" id="GO:0030435">
    <property type="term" value="P:sporulation resulting in formation of a cellular spore"/>
    <property type="evidence" value="ECO:0007669"/>
    <property type="project" value="UniProtKB-KW"/>
</dbReference>
<dbReference type="HAMAP" id="MF_00665">
    <property type="entry name" value="SspO"/>
    <property type="match status" value="1"/>
</dbReference>
<dbReference type="InterPro" id="IPR012613">
    <property type="entry name" value="SASP_SspO"/>
</dbReference>
<dbReference type="NCBIfam" id="TIGR02864">
    <property type="entry name" value="spore_sspO"/>
    <property type="match status" value="1"/>
</dbReference>
<dbReference type="Pfam" id="PF08175">
    <property type="entry name" value="SspO"/>
    <property type="match status" value="1"/>
</dbReference>